<evidence type="ECO:0000255" key="1">
    <source>
        <dbReference type="HAMAP-Rule" id="MF_01959"/>
    </source>
</evidence>
<gene>
    <name evidence="1" type="primary">ccmE</name>
    <name evidence="1" type="synonym">cycJ</name>
    <name type="ordered locus">VV1_1965</name>
</gene>
<proteinExistence type="inferred from homology"/>
<organism>
    <name type="scientific">Vibrio vulnificus (strain CMCP6)</name>
    <dbReference type="NCBI Taxonomy" id="216895"/>
    <lineage>
        <taxon>Bacteria</taxon>
        <taxon>Pseudomonadati</taxon>
        <taxon>Pseudomonadota</taxon>
        <taxon>Gammaproteobacteria</taxon>
        <taxon>Vibrionales</taxon>
        <taxon>Vibrionaceae</taxon>
        <taxon>Vibrio</taxon>
    </lineage>
</organism>
<comment type="function">
    <text evidence="1">Heme chaperone required for the biogenesis of c-type cytochromes. Transiently binds heme delivered by CcmC and transfers the heme to apo-cytochromes in a process facilitated by CcmF and CcmH.</text>
</comment>
<comment type="subcellular location">
    <subcellularLocation>
        <location evidence="1">Cell inner membrane</location>
        <topology evidence="1">Single-pass type II membrane protein</topology>
        <orientation evidence="1">Periplasmic side</orientation>
    </subcellularLocation>
</comment>
<comment type="similarity">
    <text evidence="1">Belongs to the CcmE/CycJ family.</text>
</comment>
<sequence>MNPRRQKRLGIILAILIGVSATIGLMIYALNQNMDLFYTPTELVNGKDDGTKPEVGQRLRIGGMVVMGSVRRDPESLKVRFDLADVGPKVTIEYEGILPDLFREGQGIVAQGVLKDATTVEAFEVLAKHDEEYMPPEIAEAMKKTHAPLQYSEEQKQGSGQ</sequence>
<keyword id="KW-0997">Cell inner membrane</keyword>
<keyword id="KW-1003">Cell membrane</keyword>
<keyword id="KW-0201">Cytochrome c-type biogenesis</keyword>
<keyword id="KW-0349">Heme</keyword>
<keyword id="KW-0408">Iron</keyword>
<keyword id="KW-0472">Membrane</keyword>
<keyword id="KW-0479">Metal-binding</keyword>
<keyword id="KW-0735">Signal-anchor</keyword>
<keyword id="KW-0812">Transmembrane</keyword>
<keyword id="KW-1133">Transmembrane helix</keyword>
<name>CCME_VIBVU</name>
<protein>
    <recommendedName>
        <fullName evidence="1">Cytochrome c-type biogenesis protein CcmE</fullName>
    </recommendedName>
    <alternativeName>
        <fullName evidence="1">Cytochrome c maturation protein E</fullName>
    </alternativeName>
    <alternativeName>
        <fullName evidence="1">Heme chaperone CcmE</fullName>
    </alternativeName>
</protein>
<dbReference type="EMBL" id="AE016795">
    <property type="protein sequence ID" value="AAO10365.1"/>
    <property type="molecule type" value="Genomic_DNA"/>
</dbReference>
<dbReference type="RefSeq" id="WP_011079864.1">
    <property type="nucleotide sequence ID" value="NC_004459.3"/>
</dbReference>
<dbReference type="SMR" id="Q8DB58"/>
<dbReference type="GeneID" id="93896187"/>
<dbReference type="KEGG" id="vvu:VV1_1965"/>
<dbReference type="HOGENOM" id="CLU_079503_1_0_6"/>
<dbReference type="Proteomes" id="UP000002275">
    <property type="component" value="Chromosome 1"/>
</dbReference>
<dbReference type="GO" id="GO:0005886">
    <property type="term" value="C:plasma membrane"/>
    <property type="evidence" value="ECO:0007669"/>
    <property type="project" value="UniProtKB-SubCell"/>
</dbReference>
<dbReference type="GO" id="GO:0020037">
    <property type="term" value="F:heme binding"/>
    <property type="evidence" value="ECO:0007669"/>
    <property type="project" value="InterPro"/>
</dbReference>
<dbReference type="GO" id="GO:0046872">
    <property type="term" value="F:metal ion binding"/>
    <property type="evidence" value="ECO:0007669"/>
    <property type="project" value="UniProtKB-KW"/>
</dbReference>
<dbReference type="GO" id="GO:0017004">
    <property type="term" value="P:cytochrome complex assembly"/>
    <property type="evidence" value="ECO:0007669"/>
    <property type="project" value="UniProtKB-KW"/>
</dbReference>
<dbReference type="FunFam" id="2.40.50.140:FF:000104">
    <property type="entry name" value="Cytochrome c-type biogenesis protein CcmE"/>
    <property type="match status" value="1"/>
</dbReference>
<dbReference type="Gene3D" id="2.40.50.140">
    <property type="entry name" value="Nucleic acid-binding proteins"/>
    <property type="match status" value="1"/>
</dbReference>
<dbReference type="HAMAP" id="MF_01959">
    <property type="entry name" value="CcmE"/>
    <property type="match status" value="1"/>
</dbReference>
<dbReference type="InterPro" id="IPR004329">
    <property type="entry name" value="CcmE"/>
</dbReference>
<dbReference type="InterPro" id="IPR036127">
    <property type="entry name" value="CcmE-like_sf"/>
</dbReference>
<dbReference type="InterPro" id="IPR012340">
    <property type="entry name" value="NA-bd_OB-fold"/>
</dbReference>
<dbReference type="NCBIfam" id="NF009638">
    <property type="entry name" value="PRK13165.1"/>
    <property type="match status" value="1"/>
</dbReference>
<dbReference type="NCBIfam" id="NF009727">
    <property type="entry name" value="PRK13254.1-1"/>
    <property type="match status" value="1"/>
</dbReference>
<dbReference type="NCBIfam" id="NF009729">
    <property type="entry name" value="PRK13254.1-3"/>
    <property type="match status" value="1"/>
</dbReference>
<dbReference type="PANTHER" id="PTHR34128">
    <property type="entry name" value="CYTOCHROME C-TYPE BIOGENESIS PROTEIN CCME HOMOLOG, MITOCHONDRIAL"/>
    <property type="match status" value="1"/>
</dbReference>
<dbReference type="PANTHER" id="PTHR34128:SF2">
    <property type="entry name" value="CYTOCHROME C-TYPE BIOGENESIS PROTEIN CCME HOMOLOG, MITOCHONDRIAL"/>
    <property type="match status" value="1"/>
</dbReference>
<dbReference type="Pfam" id="PF03100">
    <property type="entry name" value="CcmE"/>
    <property type="match status" value="1"/>
</dbReference>
<dbReference type="SUPFAM" id="SSF82093">
    <property type="entry name" value="Heme chaperone CcmE"/>
    <property type="match status" value="1"/>
</dbReference>
<feature type="chain" id="PRO_0000238875" description="Cytochrome c-type biogenesis protein CcmE">
    <location>
        <begin position="1"/>
        <end position="161"/>
    </location>
</feature>
<feature type="topological domain" description="Cytoplasmic" evidence="1">
    <location>
        <begin position="1"/>
        <end position="8"/>
    </location>
</feature>
<feature type="transmembrane region" description="Helical; Signal-anchor for type II membrane protein" evidence="1">
    <location>
        <begin position="9"/>
        <end position="29"/>
    </location>
</feature>
<feature type="topological domain" description="Periplasmic" evidence="1">
    <location>
        <begin position="30"/>
        <end position="161"/>
    </location>
</feature>
<feature type="binding site" description="covalent" evidence="1">
    <location>
        <position position="129"/>
    </location>
    <ligand>
        <name>heme</name>
        <dbReference type="ChEBI" id="CHEBI:30413"/>
    </ligand>
</feature>
<feature type="binding site" description="axial binding residue" evidence="1">
    <location>
        <position position="133"/>
    </location>
    <ligand>
        <name>heme</name>
        <dbReference type="ChEBI" id="CHEBI:30413"/>
    </ligand>
    <ligandPart>
        <name>Fe</name>
        <dbReference type="ChEBI" id="CHEBI:18248"/>
    </ligandPart>
</feature>
<accession>Q8DB58</accession>
<reference key="1">
    <citation type="submission" date="2002-12" db="EMBL/GenBank/DDBJ databases">
        <title>Complete genome sequence of Vibrio vulnificus CMCP6.</title>
        <authorList>
            <person name="Rhee J.H."/>
            <person name="Kim S.Y."/>
            <person name="Chung S.S."/>
            <person name="Kim J.J."/>
            <person name="Moon Y.H."/>
            <person name="Jeong H."/>
            <person name="Choy H.E."/>
        </authorList>
    </citation>
    <scope>NUCLEOTIDE SEQUENCE [LARGE SCALE GENOMIC DNA]</scope>
    <source>
        <strain>CMCP6</strain>
    </source>
</reference>